<name>NUOA_BURTA</name>
<keyword id="KW-0997">Cell inner membrane</keyword>
<keyword id="KW-1003">Cell membrane</keyword>
<keyword id="KW-0472">Membrane</keyword>
<keyword id="KW-0520">NAD</keyword>
<keyword id="KW-0874">Quinone</keyword>
<keyword id="KW-1278">Translocase</keyword>
<keyword id="KW-0812">Transmembrane</keyword>
<keyword id="KW-1133">Transmembrane helix</keyword>
<keyword id="KW-0813">Transport</keyword>
<keyword id="KW-0830">Ubiquinone</keyword>
<sequence length="119" mass="13513">MNLAAYYPVLLFLLVGTGLGIALVSIGKILGPNKPDSEKNAPYECGFEAFEDARMKFDVRYYLVAILFIIFDLETAFLFPWGVALREIGWPGFIAMMIFLLEFLLGFAYIWKKGGLDWE</sequence>
<gene>
    <name evidence="1" type="primary">nuoA</name>
    <name type="ordered locus">BTH_I1061</name>
</gene>
<accession>Q2SZN5</accession>
<reference key="1">
    <citation type="journal article" date="2005" name="BMC Genomics">
        <title>Bacterial genome adaptation to niches: divergence of the potential virulence genes in three Burkholderia species of different survival strategies.</title>
        <authorList>
            <person name="Kim H.S."/>
            <person name="Schell M.A."/>
            <person name="Yu Y."/>
            <person name="Ulrich R.L."/>
            <person name="Sarria S.H."/>
            <person name="Nierman W.C."/>
            <person name="DeShazer D."/>
        </authorList>
    </citation>
    <scope>NUCLEOTIDE SEQUENCE [LARGE SCALE GENOMIC DNA]</scope>
    <source>
        <strain>ATCC 700388 / DSM 13276 / CCUG 48851 / CIP 106301 / E264</strain>
    </source>
</reference>
<dbReference type="EC" id="7.1.1.-" evidence="1"/>
<dbReference type="EMBL" id="CP000086">
    <property type="protein sequence ID" value="ABC38883.1"/>
    <property type="molecule type" value="Genomic_DNA"/>
</dbReference>
<dbReference type="RefSeq" id="WP_004186624.1">
    <property type="nucleotide sequence ID" value="NZ_CP008785.1"/>
</dbReference>
<dbReference type="SMR" id="Q2SZN5"/>
<dbReference type="KEGG" id="bte:BTH_I1061"/>
<dbReference type="HOGENOM" id="CLU_119549_3_1_4"/>
<dbReference type="Proteomes" id="UP000001930">
    <property type="component" value="Chromosome I"/>
</dbReference>
<dbReference type="GO" id="GO:0030964">
    <property type="term" value="C:NADH dehydrogenase complex"/>
    <property type="evidence" value="ECO:0007669"/>
    <property type="project" value="TreeGrafter"/>
</dbReference>
<dbReference type="GO" id="GO:0005886">
    <property type="term" value="C:plasma membrane"/>
    <property type="evidence" value="ECO:0007669"/>
    <property type="project" value="UniProtKB-SubCell"/>
</dbReference>
<dbReference type="GO" id="GO:0008137">
    <property type="term" value="F:NADH dehydrogenase (ubiquinone) activity"/>
    <property type="evidence" value="ECO:0007669"/>
    <property type="project" value="InterPro"/>
</dbReference>
<dbReference type="GO" id="GO:0050136">
    <property type="term" value="F:NADH:ubiquinone reductase (non-electrogenic) activity"/>
    <property type="evidence" value="ECO:0007669"/>
    <property type="project" value="UniProtKB-UniRule"/>
</dbReference>
<dbReference type="GO" id="GO:0048038">
    <property type="term" value="F:quinone binding"/>
    <property type="evidence" value="ECO:0007669"/>
    <property type="project" value="UniProtKB-KW"/>
</dbReference>
<dbReference type="FunFam" id="1.20.58.1610:FF:000004">
    <property type="entry name" value="NADH-quinone oxidoreductase subunit A"/>
    <property type="match status" value="1"/>
</dbReference>
<dbReference type="Gene3D" id="1.20.58.1610">
    <property type="entry name" value="NADH:ubiquinone/plastoquinone oxidoreductase, chain 3"/>
    <property type="match status" value="1"/>
</dbReference>
<dbReference type="HAMAP" id="MF_01394">
    <property type="entry name" value="NDH1_NuoA"/>
    <property type="match status" value="1"/>
</dbReference>
<dbReference type="InterPro" id="IPR023043">
    <property type="entry name" value="NAD(P)H_OxRDtase_bac/plastid"/>
</dbReference>
<dbReference type="InterPro" id="IPR000440">
    <property type="entry name" value="NADH_UbQ/plastoQ_OxRdtase_su3"/>
</dbReference>
<dbReference type="InterPro" id="IPR038430">
    <property type="entry name" value="NDAH_ubi_oxred_su3_sf"/>
</dbReference>
<dbReference type="PANTHER" id="PTHR11058">
    <property type="entry name" value="NADH-UBIQUINONE OXIDOREDUCTASE CHAIN 3"/>
    <property type="match status" value="1"/>
</dbReference>
<dbReference type="PANTHER" id="PTHR11058:SF9">
    <property type="entry name" value="NADH-UBIQUINONE OXIDOREDUCTASE CHAIN 3"/>
    <property type="match status" value="1"/>
</dbReference>
<dbReference type="Pfam" id="PF00507">
    <property type="entry name" value="Oxidored_q4"/>
    <property type="match status" value="1"/>
</dbReference>
<feature type="chain" id="PRO_0000362650" description="NADH-quinone oxidoreductase subunit A">
    <location>
        <begin position="1"/>
        <end position="119"/>
    </location>
</feature>
<feature type="transmembrane region" description="Helical" evidence="1">
    <location>
        <begin position="7"/>
        <end position="27"/>
    </location>
</feature>
<feature type="transmembrane region" description="Helical" evidence="1">
    <location>
        <begin position="63"/>
        <end position="83"/>
    </location>
</feature>
<feature type="transmembrane region" description="Helical" evidence="1">
    <location>
        <begin position="88"/>
        <end position="108"/>
    </location>
</feature>
<organism>
    <name type="scientific">Burkholderia thailandensis (strain ATCC 700388 / DSM 13276 / CCUG 48851 / CIP 106301 / E264)</name>
    <dbReference type="NCBI Taxonomy" id="271848"/>
    <lineage>
        <taxon>Bacteria</taxon>
        <taxon>Pseudomonadati</taxon>
        <taxon>Pseudomonadota</taxon>
        <taxon>Betaproteobacteria</taxon>
        <taxon>Burkholderiales</taxon>
        <taxon>Burkholderiaceae</taxon>
        <taxon>Burkholderia</taxon>
        <taxon>pseudomallei group</taxon>
    </lineage>
</organism>
<evidence type="ECO:0000255" key="1">
    <source>
        <dbReference type="HAMAP-Rule" id="MF_01394"/>
    </source>
</evidence>
<protein>
    <recommendedName>
        <fullName evidence="1">NADH-quinone oxidoreductase subunit A</fullName>
        <ecNumber evidence="1">7.1.1.-</ecNumber>
    </recommendedName>
    <alternativeName>
        <fullName evidence="1">NADH dehydrogenase I subunit A</fullName>
    </alternativeName>
    <alternativeName>
        <fullName evidence="1">NDH-1 subunit A</fullName>
    </alternativeName>
    <alternativeName>
        <fullName evidence="1">NUO1</fullName>
    </alternativeName>
</protein>
<proteinExistence type="inferred from homology"/>
<comment type="function">
    <text evidence="1">NDH-1 shuttles electrons from NADH, via FMN and iron-sulfur (Fe-S) centers, to quinones in the respiratory chain. The immediate electron acceptor for the enzyme in this species is believed to be ubiquinone. Couples the redox reaction to proton translocation (for every two electrons transferred, four hydrogen ions are translocated across the cytoplasmic membrane), and thus conserves the redox energy in a proton gradient.</text>
</comment>
<comment type="catalytic activity">
    <reaction evidence="1">
        <text>a quinone + NADH + 5 H(+)(in) = a quinol + NAD(+) + 4 H(+)(out)</text>
        <dbReference type="Rhea" id="RHEA:57888"/>
        <dbReference type="ChEBI" id="CHEBI:15378"/>
        <dbReference type="ChEBI" id="CHEBI:24646"/>
        <dbReference type="ChEBI" id="CHEBI:57540"/>
        <dbReference type="ChEBI" id="CHEBI:57945"/>
        <dbReference type="ChEBI" id="CHEBI:132124"/>
    </reaction>
</comment>
<comment type="subunit">
    <text evidence="1">NDH-1 is composed of 14 different subunits. Subunits NuoA, H, J, K, L, M, N constitute the membrane sector of the complex.</text>
</comment>
<comment type="subcellular location">
    <subcellularLocation>
        <location evidence="1">Cell inner membrane</location>
        <topology evidence="1">Multi-pass membrane protein</topology>
    </subcellularLocation>
</comment>
<comment type="similarity">
    <text evidence="1">Belongs to the complex I subunit 3 family.</text>
</comment>